<reference key="1">
    <citation type="journal article" date="1996" name="Mol. Biochem. Parasitol.">
        <title>Sequence conservation of schistosome cyclophilins.</title>
        <authorList>
            <person name="Klinkert M.-Q."/>
            <person name="Bugli F."/>
            <person name="Cruz J."/>
            <person name="Engels B."/>
            <person name="Cioli D."/>
        </authorList>
    </citation>
    <scope>NUCLEOTIDE SEQUENCE [MRNA]</scope>
    <source>
        <strain>Chinese</strain>
    </source>
</reference>
<name>PPIB_SCHJA</name>
<keyword id="KW-0256">Endoplasmic reticulum</keyword>
<keyword id="KW-0413">Isomerase</keyword>
<keyword id="KW-0697">Rotamase</keyword>
<keyword id="KW-0732">Signal</keyword>
<comment type="function">
    <text>PPIases accelerate the folding of proteins. It catalyzes the cis-trans isomerization of proline imidic peptide bonds in oligopeptides.</text>
</comment>
<comment type="catalytic activity">
    <reaction>
        <text>[protein]-peptidylproline (omega=180) = [protein]-peptidylproline (omega=0)</text>
        <dbReference type="Rhea" id="RHEA:16237"/>
        <dbReference type="Rhea" id="RHEA-COMP:10747"/>
        <dbReference type="Rhea" id="RHEA-COMP:10748"/>
        <dbReference type="ChEBI" id="CHEBI:83833"/>
        <dbReference type="ChEBI" id="CHEBI:83834"/>
        <dbReference type="EC" id="5.2.1.8"/>
    </reaction>
</comment>
<comment type="activity regulation">
    <text>Inhibited by cyclosporin A (CsA).</text>
</comment>
<comment type="subcellular location">
    <subcellularLocation>
        <location evidence="1">Endoplasmic reticulum lumen</location>
    </subcellularLocation>
</comment>
<comment type="similarity">
    <text evidence="4">Belongs to the cyclophilin-type PPIase family. PPIase B subfamily.</text>
</comment>
<sequence>MAVLRVLCGLLLVSILFLGFVLSEGNGPKVTEKVFFDIEVDEQPLGRIIIGLFGKTVPKTVENFKQLSIGTTLKDGRTAAYKGSTFHRVIKSFMIQGGDFTNHDGTGGFSIYGERFPDENFKLKHVGAGWLSMANAGPNTNGAQFFITTTQNPWLDGKHVVFGKVVEGMSVVRQIENMQTDSRDRPVKSVKIANCGHIPVDVPFSVSNTDAAE</sequence>
<accession>Q27774</accession>
<feature type="signal peptide" evidence="2">
    <location>
        <begin position="1"/>
        <end position="23"/>
    </location>
</feature>
<feature type="chain" id="PRO_0000025483" description="Peptidyl-prolyl cis-trans isomerase B">
    <location>
        <begin position="24"/>
        <end position="213"/>
    </location>
</feature>
<feature type="domain" description="PPIase cyclophilin-type" evidence="3">
    <location>
        <begin position="35"/>
        <end position="197"/>
    </location>
</feature>
<feature type="short sequence motif" description="Prevents secretion from ER" evidence="1">
    <location>
        <begin position="210"/>
        <end position="213"/>
    </location>
</feature>
<evidence type="ECO:0000250" key="1"/>
<evidence type="ECO:0000255" key="2"/>
<evidence type="ECO:0000255" key="3">
    <source>
        <dbReference type="PROSITE-ProRule" id="PRU00156"/>
    </source>
</evidence>
<evidence type="ECO:0000305" key="4"/>
<organism>
    <name type="scientific">Schistosoma japonicum</name>
    <name type="common">Blood fluke</name>
    <dbReference type="NCBI Taxonomy" id="6182"/>
    <lineage>
        <taxon>Eukaryota</taxon>
        <taxon>Metazoa</taxon>
        <taxon>Spiralia</taxon>
        <taxon>Lophotrochozoa</taxon>
        <taxon>Platyhelminthes</taxon>
        <taxon>Trematoda</taxon>
        <taxon>Digenea</taxon>
        <taxon>Strigeidida</taxon>
        <taxon>Schistosomatoidea</taxon>
        <taxon>Schistosomatidae</taxon>
        <taxon>Schistosoma</taxon>
    </lineage>
</organism>
<protein>
    <recommendedName>
        <fullName>Peptidyl-prolyl cis-trans isomerase B</fullName>
        <shortName>PPIase B</shortName>
        <ecNumber>5.2.1.8</ecNumber>
    </recommendedName>
    <alternativeName>
        <fullName>Cyclophilin B</fullName>
    </alternativeName>
    <alternativeName>
        <fullName>Rotamase B</fullName>
    </alternativeName>
    <alternativeName>
        <fullName>S-cyclophilin</fullName>
    </alternativeName>
</protein>
<proteinExistence type="evidence at transcript level"/>
<dbReference type="EC" id="5.2.1.8"/>
<dbReference type="EMBL" id="U50389">
    <property type="protein sequence ID" value="AAC47316.1"/>
    <property type="molecule type" value="mRNA"/>
</dbReference>
<dbReference type="SMR" id="Q27774"/>
<dbReference type="GO" id="GO:0005788">
    <property type="term" value="C:endoplasmic reticulum lumen"/>
    <property type="evidence" value="ECO:0007669"/>
    <property type="project" value="UniProtKB-SubCell"/>
</dbReference>
<dbReference type="GO" id="GO:0016018">
    <property type="term" value="F:cyclosporin A binding"/>
    <property type="evidence" value="ECO:0007669"/>
    <property type="project" value="TreeGrafter"/>
</dbReference>
<dbReference type="GO" id="GO:0003755">
    <property type="term" value="F:peptidyl-prolyl cis-trans isomerase activity"/>
    <property type="evidence" value="ECO:0007669"/>
    <property type="project" value="UniProtKB-KW"/>
</dbReference>
<dbReference type="GO" id="GO:0006457">
    <property type="term" value="P:protein folding"/>
    <property type="evidence" value="ECO:0007669"/>
    <property type="project" value="InterPro"/>
</dbReference>
<dbReference type="CDD" id="cd01926">
    <property type="entry name" value="cyclophilin_ABH_like"/>
    <property type="match status" value="1"/>
</dbReference>
<dbReference type="FunFam" id="2.40.100.10:FF:000001">
    <property type="entry name" value="Peptidyl-prolyl cis-trans isomerase"/>
    <property type="match status" value="1"/>
</dbReference>
<dbReference type="Gene3D" id="2.40.100.10">
    <property type="entry name" value="Cyclophilin-like"/>
    <property type="match status" value="1"/>
</dbReference>
<dbReference type="InterPro" id="IPR029000">
    <property type="entry name" value="Cyclophilin-like_dom_sf"/>
</dbReference>
<dbReference type="InterPro" id="IPR020892">
    <property type="entry name" value="Cyclophilin-type_PPIase_CS"/>
</dbReference>
<dbReference type="InterPro" id="IPR002130">
    <property type="entry name" value="Cyclophilin-type_PPIase_dom"/>
</dbReference>
<dbReference type="PANTHER" id="PTHR11071">
    <property type="entry name" value="PEPTIDYL-PROLYL CIS-TRANS ISOMERASE"/>
    <property type="match status" value="1"/>
</dbReference>
<dbReference type="PANTHER" id="PTHR11071:SF561">
    <property type="entry name" value="PEPTIDYL-PROLYL CIS-TRANS ISOMERASE D-RELATED"/>
    <property type="match status" value="1"/>
</dbReference>
<dbReference type="Pfam" id="PF00160">
    <property type="entry name" value="Pro_isomerase"/>
    <property type="match status" value="1"/>
</dbReference>
<dbReference type="PRINTS" id="PR00153">
    <property type="entry name" value="CSAPPISMRASE"/>
</dbReference>
<dbReference type="SUPFAM" id="SSF50891">
    <property type="entry name" value="Cyclophilin-like"/>
    <property type="match status" value="1"/>
</dbReference>
<dbReference type="PROSITE" id="PS00170">
    <property type="entry name" value="CSA_PPIASE_1"/>
    <property type="match status" value="1"/>
</dbReference>
<dbReference type="PROSITE" id="PS50072">
    <property type="entry name" value="CSA_PPIASE_2"/>
    <property type="match status" value="1"/>
</dbReference>